<keyword id="KW-0002">3D-structure</keyword>
<keyword id="KW-0032">Aminotransferase</keyword>
<keyword id="KW-0150">Chloroplast</keyword>
<keyword id="KW-0611">Plant defense</keyword>
<keyword id="KW-0934">Plastid</keyword>
<keyword id="KW-0663">Pyridoxal phosphate</keyword>
<keyword id="KW-1185">Reference proteome</keyword>
<keyword id="KW-0808">Transferase</keyword>
<keyword id="KW-0809">Transit peptide</keyword>
<name>ALD1_ARATH</name>
<dbReference type="EC" id="2.6.1.-" evidence="13"/>
<dbReference type="EMBL" id="AY518702">
    <property type="protein sequence ID" value="AAR99910.1"/>
    <property type="molecule type" value="mRNA"/>
</dbReference>
<dbReference type="EMBL" id="AC006218">
    <property type="protein sequence ID" value="AAD15433.2"/>
    <property type="molecule type" value="Genomic_DNA"/>
</dbReference>
<dbReference type="EMBL" id="AC006436">
    <property type="protein sequence ID" value="AAM15253.1"/>
    <property type="molecule type" value="Genomic_DNA"/>
</dbReference>
<dbReference type="EMBL" id="CP002685">
    <property type="protein sequence ID" value="AEC06261.1"/>
    <property type="molecule type" value="Genomic_DNA"/>
</dbReference>
<dbReference type="EMBL" id="AY057526">
    <property type="protein sequence ID" value="AAL09766.1"/>
    <property type="molecule type" value="mRNA"/>
</dbReference>
<dbReference type="EMBL" id="AY143898">
    <property type="protein sequence ID" value="AAN28837.1"/>
    <property type="molecule type" value="mRNA"/>
</dbReference>
<dbReference type="PIR" id="A84511">
    <property type="entry name" value="A84511"/>
</dbReference>
<dbReference type="RefSeq" id="NP_565359.1">
    <property type="nucleotide sequence ID" value="NM_126957.2"/>
</dbReference>
<dbReference type="PDB" id="4FL0">
    <property type="method" value="X-ray"/>
    <property type="resolution" value="2.30 A"/>
    <property type="chains" value="A/B=1-456"/>
</dbReference>
<dbReference type="PDBsum" id="4FL0"/>
<dbReference type="SMR" id="Q9ZQI7"/>
<dbReference type="FunCoup" id="Q9ZQI7">
    <property type="interactions" value="242"/>
</dbReference>
<dbReference type="STRING" id="3702.Q9ZQI7"/>
<dbReference type="PaxDb" id="3702-AT2G13810.1"/>
<dbReference type="ProteomicsDB" id="244949"/>
<dbReference type="EnsemblPlants" id="AT2G13810.1">
    <property type="protein sequence ID" value="AT2G13810.1"/>
    <property type="gene ID" value="AT2G13810"/>
</dbReference>
<dbReference type="GeneID" id="815864"/>
<dbReference type="Gramene" id="AT2G13810.1">
    <property type="protein sequence ID" value="AT2G13810.1"/>
    <property type="gene ID" value="AT2G13810"/>
</dbReference>
<dbReference type="KEGG" id="ath:AT2G13810"/>
<dbReference type="Araport" id="AT2G13810"/>
<dbReference type="TAIR" id="AT2G13810">
    <property type="gene designation" value="ALD1"/>
</dbReference>
<dbReference type="eggNOG" id="KOG0257">
    <property type="taxonomic scope" value="Eukaryota"/>
</dbReference>
<dbReference type="HOGENOM" id="CLU_051433_0_0_1"/>
<dbReference type="InParanoid" id="Q9ZQI7"/>
<dbReference type="OMA" id="ITSHMSN"/>
<dbReference type="PhylomeDB" id="Q9ZQI7"/>
<dbReference type="BioCyc" id="ARA:AT2G13810-MONOMER"/>
<dbReference type="BioCyc" id="MetaCyc:AT2G13810-MONOMER"/>
<dbReference type="BRENDA" id="2.6.1.83">
    <property type="organism ID" value="399"/>
</dbReference>
<dbReference type="SABIO-RK" id="Q9ZQI7"/>
<dbReference type="EvolutionaryTrace" id="Q9ZQI7"/>
<dbReference type="PRO" id="PR:Q9ZQI7"/>
<dbReference type="Proteomes" id="UP000006548">
    <property type="component" value="Chromosome 2"/>
</dbReference>
<dbReference type="ExpressionAtlas" id="Q9ZQI7">
    <property type="expression patterns" value="baseline and differential"/>
</dbReference>
<dbReference type="GO" id="GO:0009507">
    <property type="term" value="C:chloroplast"/>
    <property type="evidence" value="ECO:0007669"/>
    <property type="project" value="UniProtKB-SubCell"/>
</dbReference>
<dbReference type="GO" id="GO:0009536">
    <property type="term" value="C:plastid"/>
    <property type="evidence" value="ECO:0000314"/>
    <property type="project" value="TAIR"/>
</dbReference>
<dbReference type="GO" id="GO:0062045">
    <property type="term" value="F:L-lysine alpha-aminotransferase"/>
    <property type="evidence" value="ECO:0000315"/>
    <property type="project" value="TAIR"/>
</dbReference>
<dbReference type="GO" id="GO:0030170">
    <property type="term" value="F:pyridoxal phosphate binding"/>
    <property type="evidence" value="ECO:0000314"/>
    <property type="project" value="UniProtKB"/>
</dbReference>
<dbReference type="GO" id="GO:0008483">
    <property type="term" value="F:transaminase activity"/>
    <property type="evidence" value="ECO:0000314"/>
    <property type="project" value="UniProtKB"/>
</dbReference>
<dbReference type="GO" id="GO:0042742">
    <property type="term" value="P:defense response to bacterium"/>
    <property type="evidence" value="ECO:0000315"/>
    <property type="project" value="UniProtKB"/>
</dbReference>
<dbReference type="GO" id="GO:0062034">
    <property type="term" value="P:L-pipecolic acid biosynthetic process"/>
    <property type="evidence" value="ECO:0000315"/>
    <property type="project" value="TAIR"/>
</dbReference>
<dbReference type="GO" id="GO:0010150">
    <property type="term" value="P:leaf senescence"/>
    <property type="evidence" value="ECO:0000315"/>
    <property type="project" value="UniProtKB"/>
</dbReference>
<dbReference type="GO" id="GO:0009627">
    <property type="term" value="P:systemic acquired resistance"/>
    <property type="evidence" value="ECO:0000314"/>
    <property type="project" value="TAIR"/>
</dbReference>
<dbReference type="GO" id="GO:0009862">
    <property type="term" value="P:systemic acquired resistance, salicylic acid mediated signaling pathway"/>
    <property type="evidence" value="ECO:0000315"/>
    <property type="project" value="UniProtKB"/>
</dbReference>
<dbReference type="CDD" id="cd00609">
    <property type="entry name" value="AAT_like"/>
    <property type="match status" value="1"/>
</dbReference>
<dbReference type="FunFam" id="3.40.640.10:FF:000099">
    <property type="entry name" value="LL-diaminopimelate aminotransferase, chloroplastic"/>
    <property type="match status" value="1"/>
</dbReference>
<dbReference type="Gene3D" id="3.90.1150.10">
    <property type="entry name" value="Aspartate Aminotransferase, domain 1"/>
    <property type="match status" value="1"/>
</dbReference>
<dbReference type="Gene3D" id="3.40.640.10">
    <property type="entry name" value="Type I PLP-dependent aspartate aminotransferase-like (Major domain)"/>
    <property type="match status" value="1"/>
</dbReference>
<dbReference type="InterPro" id="IPR004839">
    <property type="entry name" value="Aminotransferase_I/II_large"/>
</dbReference>
<dbReference type="InterPro" id="IPR019942">
    <property type="entry name" value="DapL/ALD1"/>
</dbReference>
<dbReference type="InterPro" id="IPR015424">
    <property type="entry name" value="PyrdxlP-dep_Trfase"/>
</dbReference>
<dbReference type="InterPro" id="IPR015421">
    <property type="entry name" value="PyrdxlP-dep_Trfase_major"/>
</dbReference>
<dbReference type="InterPro" id="IPR015422">
    <property type="entry name" value="PyrdxlP-dep_Trfase_small"/>
</dbReference>
<dbReference type="NCBIfam" id="TIGR03542">
    <property type="entry name" value="DAPAT_plant"/>
    <property type="match status" value="1"/>
</dbReference>
<dbReference type="PANTHER" id="PTHR43144">
    <property type="entry name" value="AMINOTRANSFERASE"/>
    <property type="match status" value="1"/>
</dbReference>
<dbReference type="Pfam" id="PF00155">
    <property type="entry name" value="Aminotran_1_2"/>
    <property type="match status" value="1"/>
</dbReference>
<dbReference type="SUPFAM" id="SSF53383">
    <property type="entry name" value="PLP-dependent transferases"/>
    <property type="match status" value="1"/>
</dbReference>
<reference key="1">
    <citation type="journal article" date="2004" name="Plant Cell">
        <title>Divergent roles in Arabidopsis thaliana development and defense of two homologous genes, aberrant growth and death2 and AGD2-LIKE DEFENSE RESPONSE PROTEIN1, encoding novel aminotransferases.</title>
        <authorList>
            <person name="Song J.T."/>
            <person name="Lu H."/>
            <person name="Greenberg J.T."/>
        </authorList>
    </citation>
    <scope>NUCLEOTIDE SEQUENCE [MRNA]</scope>
    <scope>FUNCTION</scope>
    <scope>TISSUE SPECIFICITY</scope>
    <scope>INDUCTION</scope>
    <scope>DISRUPTION PHENOTYPE</scope>
</reference>
<reference key="2">
    <citation type="journal article" date="1999" name="Nature">
        <title>Sequence and analysis of chromosome 2 of the plant Arabidopsis thaliana.</title>
        <authorList>
            <person name="Lin X."/>
            <person name="Kaul S."/>
            <person name="Rounsley S.D."/>
            <person name="Shea T.P."/>
            <person name="Benito M.-I."/>
            <person name="Town C.D."/>
            <person name="Fujii C.Y."/>
            <person name="Mason T.M."/>
            <person name="Bowman C.L."/>
            <person name="Barnstead M.E."/>
            <person name="Feldblyum T.V."/>
            <person name="Buell C.R."/>
            <person name="Ketchum K.A."/>
            <person name="Lee J.J."/>
            <person name="Ronning C.M."/>
            <person name="Koo H.L."/>
            <person name="Moffat K.S."/>
            <person name="Cronin L.A."/>
            <person name="Shen M."/>
            <person name="Pai G."/>
            <person name="Van Aken S."/>
            <person name="Umayam L."/>
            <person name="Tallon L.J."/>
            <person name="Gill J.E."/>
            <person name="Adams M.D."/>
            <person name="Carrera A.J."/>
            <person name="Creasy T.H."/>
            <person name="Goodman H.M."/>
            <person name="Somerville C.R."/>
            <person name="Copenhaver G.P."/>
            <person name="Preuss D."/>
            <person name="Nierman W.C."/>
            <person name="White O."/>
            <person name="Eisen J.A."/>
            <person name="Salzberg S.L."/>
            <person name="Fraser C.M."/>
            <person name="Venter J.C."/>
        </authorList>
    </citation>
    <scope>NUCLEOTIDE SEQUENCE [LARGE SCALE GENOMIC DNA]</scope>
    <source>
        <strain>cv. Columbia</strain>
    </source>
</reference>
<reference key="3">
    <citation type="journal article" date="2017" name="Plant J.">
        <title>Araport11: a complete reannotation of the Arabidopsis thaliana reference genome.</title>
        <authorList>
            <person name="Cheng C.Y."/>
            <person name="Krishnakumar V."/>
            <person name="Chan A.P."/>
            <person name="Thibaud-Nissen F."/>
            <person name="Schobel S."/>
            <person name="Town C.D."/>
        </authorList>
    </citation>
    <scope>GENOME REANNOTATION</scope>
    <source>
        <strain>cv. Columbia</strain>
    </source>
</reference>
<reference key="4">
    <citation type="journal article" date="2003" name="Science">
        <title>Empirical analysis of transcriptional activity in the Arabidopsis genome.</title>
        <authorList>
            <person name="Yamada K."/>
            <person name="Lim J."/>
            <person name="Dale J.M."/>
            <person name="Chen H."/>
            <person name="Shinn P."/>
            <person name="Palm C.J."/>
            <person name="Southwick A.M."/>
            <person name="Wu H.C."/>
            <person name="Kim C.J."/>
            <person name="Nguyen M."/>
            <person name="Pham P.K."/>
            <person name="Cheuk R.F."/>
            <person name="Karlin-Newmann G."/>
            <person name="Liu S.X."/>
            <person name="Lam B."/>
            <person name="Sakano H."/>
            <person name="Wu T."/>
            <person name="Yu G."/>
            <person name="Miranda M."/>
            <person name="Quach H.L."/>
            <person name="Tripp M."/>
            <person name="Chang C.H."/>
            <person name="Lee J.M."/>
            <person name="Toriumi M.J."/>
            <person name="Chan M.M."/>
            <person name="Tang C.C."/>
            <person name="Onodera C.S."/>
            <person name="Deng J.M."/>
            <person name="Akiyama K."/>
            <person name="Ansari Y."/>
            <person name="Arakawa T."/>
            <person name="Banh J."/>
            <person name="Banno F."/>
            <person name="Bowser L."/>
            <person name="Brooks S.Y."/>
            <person name="Carninci P."/>
            <person name="Chao Q."/>
            <person name="Choy N."/>
            <person name="Enju A."/>
            <person name="Goldsmith A.D."/>
            <person name="Gurjal M."/>
            <person name="Hansen N.F."/>
            <person name="Hayashizaki Y."/>
            <person name="Johnson-Hopson C."/>
            <person name="Hsuan V.W."/>
            <person name="Iida K."/>
            <person name="Karnes M."/>
            <person name="Khan S."/>
            <person name="Koesema E."/>
            <person name="Ishida J."/>
            <person name="Jiang P.X."/>
            <person name="Jones T."/>
            <person name="Kawai J."/>
            <person name="Kamiya A."/>
            <person name="Meyers C."/>
            <person name="Nakajima M."/>
            <person name="Narusaka M."/>
            <person name="Seki M."/>
            <person name="Sakurai T."/>
            <person name="Satou M."/>
            <person name="Tamse R."/>
            <person name="Vaysberg M."/>
            <person name="Wallender E.K."/>
            <person name="Wong C."/>
            <person name="Yamamura Y."/>
            <person name="Yuan S."/>
            <person name="Shinozaki K."/>
            <person name="Davis R.W."/>
            <person name="Theologis A."/>
            <person name="Ecker J.R."/>
        </authorList>
    </citation>
    <scope>NUCLEOTIDE SEQUENCE [LARGE SCALE MRNA]</scope>
    <source>
        <strain>cv. Columbia</strain>
    </source>
</reference>
<reference key="5">
    <citation type="journal article" date="2004" name="Plant J.">
        <title>A key role for ALD1 in activation of local and systemic defenses in Arabidopsis.</title>
        <authorList>
            <person name="Song J.T."/>
            <person name="Lu H."/>
            <person name="McDowell J.M."/>
            <person name="Greenberg J.T."/>
        </authorList>
    </citation>
    <scope>FUNCTION</scope>
    <scope>INDUCTION</scope>
    <scope>DISRUPTION PHENOTYPE</scope>
</reference>
<reference key="6">
    <citation type="journal article" date="2008" name="Mol. Plant">
        <title>A lesion-mimic syntaxin double mutant in Arabidopsis reveals novel complexity of pathogen defense signaling.</title>
        <authorList>
            <person name="Zhang Z."/>
            <person name="Lenk A."/>
            <person name="Andersson M.X."/>
            <person name="Gjetting T."/>
            <person name="Pedersen C."/>
            <person name="Nielsen M.E."/>
            <person name="Newman M.A."/>
            <person name="Hou B.H."/>
            <person name="Somerville S.C."/>
            <person name="Thordal-Christensen H."/>
        </authorList>
    </citation>
    <scope>FUNCTION</scope>
</reference>
<reference key="7">
    <citation type="journal article" date="2008" name="Plant J.">
        <title>Arabidopsis proteins important for modulating defense responses to Pseudomonas syringae that secrete HopW1-1.</title>
        <authorList>
            <person name="Lee M.W."/>
            <person name="Jelenska J."/>
            <person name="Greenberg J.T."/>
        </authorList>
    </citation>
    <scope>FUNCTION</scope>
</reference>
<reference key="8">
    <citation type="journal article" date="2009" name="Plant J.">
        <title>Nitric oxide modulates ozone-induced cell death, hormone biosynthesis and gene expression in Arabidopsis thaliana.</title>
        <authorList>
            <person name="Ahlfors R."/>
            <person name="Brosche M."/>
            <person name="Kollist H."/>
            <person name="Kangasjaervi J."/>
        </authorList>
    </citation>
    <scope>INDUCTION</scope>
</reference>
<reference key="9">
    <citation type="journal article" date="2011" name="J. Genet. Genomics">
        <title>Suppression of edr2-mediated powdery mildew resistance, cell death and ethylene-induced senescence by mutations in ALD1 in Arabidopsis.</title>
        <authorList>
            <person name="Nie H."/>
            <person name="Wu Y."/>
            <person name="Yao C."/>
            <person name="Tang D."/>
        </authorList>
    </citation>
    <scope>FUNCTION</scope>
    <scope>TISSUE SPECIFICITY</scope>
    <scope>DISRUPTION PHENOTYPE</scope>
</reference>
<reference key="10">
    <citation type="journal article" date="2012" name="Plant Cell">
        <title>Pipecolic acid, an endogenous mediator of defense amplification and priming, is a critical regulator of inducible plant immunity.</title>
        <authorList>
            <person name="Navarova H."/>
            <person name="Bernsdorff F."/>
            <person name="Doering A.C."/>
            <person name="Zeier J."/>
        </authorList>
    </citation>
    <scope>FUNCTION</scope>
</reference>
<reference key="11">
    <citation type="journal article" date="2015" name="Mol. Plant Microbe Interact.">
        <title>ALD1 regulates basal immune components and early inducible defense responses in Arabidopsis.</title>
        <authorList>
            <person name="Cecchini N.M."/>
            <person name="Jung H.W."/>
            <person name="Engle N.L."/>
            <person name="Tschaplinski T.J."/>
            <person name="Greenberg J.T."/>
        </authorList>
    </citation>
    <scope>FUNCTION</scope>
    <scope>SUBCELLULAR LOCATION</scope>
</reference>
<reference key="12">
    <citation type="journal article" date="2016" name="Plant Cell">
        <title>Characterization of a pipecolic acid biosynthesis pathway required for systemic acquired resistance.</title>
        <authorList>
            <person name="Ding P."/>
            <person name="Rekhter D."/>
            <person name="Ding Y."/>
            <person name="Feussner K."/>
            <person name="Busta L."/>
            <person name="Haroth S."/>
            <person name="Xu S."/>
            <person name="Li X."/>
            <person name="Jetter R."/>
            <person name="Feussner I."/>
            <person name="Zhang Y."/>
        </authorList>
    </citation>
    <scope>FUNCTION</scope>
</reference>
<reference key="13">
    <citation type="journal article" date="2013" name="Acta Crystallogr. F">
        <title>Structure of ALD1, a plant-specific homologue of the universal diaminopimelate aminotransferase enzyme of lysine biosynthesis.</title>
        <authorList>
            <person name="Sobolev V."/>
            <person name="Edelman M."/>
            <person name="Dym O."/>
            <person name="Unger T."/>
            <person name="Albeck S."/>
            <person name="Kirma M."/>
            <person name="Galili G."/>
        </authorList>
    </citation>
    <scope>X-RAY CRYSTALLOGRAPHY (2.30 ANGSTROMS) IN COMPLEX WITH PYRIDOXAL PHOSPHATE</scope>
</reference>
<protein>
    <recommendedName>
        <fullName>Aminotransferase ALD1, chloroplastic</fullName>
        <ecNumber evidence="13">2.6.1.-</ecNumber>
    </recommendedName>
    <alternativeName>
        <fullName evidence="12">AGD2-like defense response protein 1</fullName>
    </alternativeName>
</protein>
<organism>
    <name type="scientific">Arabidopsis thaliana</name>
    <name type="common">Mouse-ear cress</name>
    <dbReference type="NCBI Taxonomy" id="3702"/>
    <lineage>
        <taxon>Eukaryota</taxon>
        <taxon>Viridiplantae</taxon>
        <taxon>Streptophyta</taxon>
        <taxon>Embryophyta</taxon>
        <taxon>Tracheophyta</taxon>
        <taxon>Spermatophyta</taxon>
        <taxon>Magnoliopsida</taxon>
        <taxon>eudicotyledons</taxon>
        <taxon>Gunneridae</taxon>
        <taxon>Pentapetalae</taxon>
        <taxon>rosids</taxon>
        <taxon>malvids</taxon>
        <taxon>Brassicales</taxon>
        <taxon>Brassicaceae</taxon>
        <taxon>Camelineae</taxon>
        <taxon>Arabidopsis</taxon>
    </lineage>
</organism>
<comment type="function">
    <text evidence="2 3 4 6 7 8 10 11">Aminotransferase involved in local and systemic acquired resistance (SAR) to the bacterial pathogen P.syringae. Required for salicylic acid (SA) and camalexin accumulation upon pathogen infection. Possesses aminotransferase activity in vitro and may generate amino-acid-derived defense signals in vivo. May be involved in ethylene-induced senescence signaling. Involved in the biosynthesis of pipecolate (Pip), a metabolite that orchestrates defense amplification, positive regulation of SA biosynthesis, and priming to guarantee effective local resistance induction and the establishment of SAR (PubMed:23221596, PubMed:27758894). Converts lysine to alpha-keto-epsilon-aminocaproate, which then can spontaneously cyclize to form delta-(1)-piperideine-2-carboxylate (P2C). P2C is converted to Pip by SARD4 (PubMed:27758894). May produce non-Pip metabolites that play roles in immunity. Involved in the synthesis of distinct metabolite signals that affect basal and early defenses, and later defense responses (PubMed:25372120).</text>
</comment>
<comment type="cofactor">
    <cofactor evidence="9">
        <name>pyridoxal 5'-phosphate</name>
        <dbReference type="ChEBI" id="CHEBI:597326"/>
    </cofactor>
    <text evidence="9">Binds 1 pyridoxal phosphate per subunit.</text>
</comment>
<comment type="subcellular location">
    <subcellularLocation>
        <location evidence="10">Plastid</location>
        <location evidence="10">Chloroplast</location>
    </subcellularLocation>
</comment>
<comment type="tissue specificity">
    <text evidence="2 7">Highly expressed in senescing leaves, flowers, siliques and seeds.</text>
</comment>
<comment type="induction">
    <text evidence="2 3 5">By ozone, benzothiadiazole (BTH) and infection with the bacterial pathogen P.syringae pv. maculicola. Down-regulated by nitric oxide.</text>
</comment>
<comment type="disruption phenotype">
    <text evidence="2 3 7">No visible phenotype under normal growth conditions, but during infection with virulent strain of P.syringae, mutant plants have reduced levels of SA and camalexin, and show increased susceptibility to pathogen. Leaves show decreased ethylene-induced senescence.</text>
</comment>
<comment type="miscellaneous">
    <text evidence="8 10">Treatment with exogenous pipecolate (Pip) enhances disease resistance to Pseudomonas syringae pv. maculicola (PubMed:23221596). Plants over-expressing ALD1 exhibit resistance to Pseudomonas syringae pv. maculicola (PubMed:25372120).</text>
</comment>
<comment type="similarity">
    <text evidence="13">Belongs to the class-I pyridoxal-phosphate-dependent aminotransferase family. LL-diaminopimelate aminotransferase subfamily.</text>
</comment>
<gene>
    <name evidence="12" type="primary">ALD1</name>
    <name evidence="14" type="ordered locus">At2g13810</name>
    <name evidence="15" type="ORF">F13J11.16</name>
</gene>
<proteinExistence type="evidence at protein level"/>
<accession>Q9ZQI7</accession>
<accession>Q93ZH8</accession>
<sequence length="456" mass="50577">MVSLMFFSSASPLCSSPSKIPKASLDFEMKKLGGSTKLVRNVNLEKLKNNYLFPEINRRELEHIEKHPNVQLISLGTGDTTEPIPEQITSHMSNFAHGLSTVEGYRGYGLEQGNKTLRKAIAETFYRDLHVKSNEVFVSDGAQSDISRLQLLLGSNVTIAVQDPTFPAYIDSSVIIGQTGHFHEKTKKYQNVVYMPCGPNNSFFPDLAMTPRTDVIFFCSPNNPTGYVASRKQLHQLVDFAKTNGSIIIFDSAYAAFIEDGSPRSIYEIPGAREVAIEVSSFSKFAGFTGVRLGWSIIPDELLYSNGFPIINDFHRIVTTSFNGASNIAQAGGLACLSSGGLKEIRSVNNYYKENRKILMDTLVSLGLKVYGGVNAPYLWVHFKGSKSWDVFNEILENTHIITVPGSGFGPGGEEYLRISGFGRRDHIVEASKRLQNFFNTRTKHFTYLSSTSNTN</sequence>
<feature type="transit peptide" description="Chloroplast" evidence="1">
    <location>
        <begin position="1"/>
        <end position="43"/>
    </location>
</feature>
<feature type="chain" id="PRO_0000416859" description="Aminotransferase ALD1, chloroplastic">
    <location>
        <begin position="44"/>
        <end position="456"/>
    </location>
</feature>
<feature type="binding site" evidence="9 16">
    <location>
        <position position="108"/>
    </location>
    <ligand>
        <name>pyridoxal 5'-phosphate</name>
        <dbReference type="ChEBI" id="CHEBI:597326"/>
    </ligand>
</feature>
<feature type="binding site" evidence="9 16">
    <location>
        <begin position="142"/>
        <end position="143"/>
    </location>
    <ligand>
        <name>pyridoxal 5'-phosphate</name>
        <dbReference type="ChEBI" id="CHEBI:597326"/>
    </ligand>
</feature>
<feature type="binding site" evidence="9 16">
    <location>
        <position position="223"/>
    </location>
    <ligand>
        <name>pyridoxal 5'-phosphate</name>
        <dbReference type="ChEBI" id="CHEBI:597326"/>
    </ligand>
</feature>
<feature type="binding site" evidence="9 16">
    <location>
        <position position="251"/>
    </location>
    <ligand>
        <name>pyridoxal 5'-phosphate</name>
        <dbReference type="ChEBI" id="CHEBI:597326"/>
    </ligand>
</feature>
<feature type="binding site" evidence="9 16">
    <location>
        <position position="254"/>
    </location>
    <ligand>
        <name>pyridoxal 5'-phosphate</name>
        <dbReference type="ChEBI" id="CHEBI:597326"/>
    </ligand>
</feature>
<feature type="binding site" evidence="9 16">
    <location>
        <position position="281"/>
    </location>
    <ligand>
        <name>pyridoxal 5'-phosphate</name>
        <dbReference type="ChEBI" id="CHEBI:597326"/>
    </ligand>
</feature>
<feature type="binding site" evidence="9 16">
    <location>
        <position position="283"/>
    </location>
    <ligand>
        <name>pyridoxal 5'-phosphate</name>
        <dbReference type="ChEBI" id="CHEBI:597326"/>
    </ligand>
</feature>
<feature type="binding site" evidence="9 16">
    <location>
        <position position="292"/>
    </location>
    <ligand>
        <name>pyridoxal 5'-phosphate</name>
        <dbReference type="ChEBI" id="CHEBI:597326"/>
    </ligand>
</feature>
<feature type="binding site" evidence="9 16">
    <location>
        <position position="323"/>
    </location>
    <ligand>
        <name>pyridoxal 5'-phosphate</name>
        <dbReference type="ChEBI" id="CHEBI:597326"/>
    </ligand>
</feature>
<feature type="helix" evidence="17">
    <location>
        <begin position="42"/>
        <end position="46"/>
    </location>
</feature>
<feature type="helix" evidence="17">
    <location>
        <begin position="52"/>
        <end position="66"/>
    </location>
</feature>
<feature type="helix" evidence="17">
    <location>
        <begin position="86"/>
        <end position="98"/>
    </location>
</feature>
<feature type="turn" evidence="17">
    <location>
        <begin position="102"/>
        <end position="104"/>
    </location>
</feature>
<feature type="helix" evidence="17">
    <location>
        <begin position="115"/>
        <end position="125"/>
    </location>
</feature>
<feature type="turn" evidence="17">
    <location>
        <begin position="127"/>
        <end position="130"/>
    </location>
</feature>
<feature type="helix" evidence="17">
    <location>
        <begin position="133"/>
        <end position="135"/>
    </location>
</feature>
<feature type="strand" evidence="17">
    <location>
        <begin position="136"/>
        <end position="140"/>
    </location>
</feature>
<feature type="helix" evidence="17">
    <location>
        <begin position="142"/>
        <end position="153"/>
    </location>
</feature>
<feature type="strand" evidence="17">
    <location>
        <begin position="159"/>
        <end position="164"/>
    </location>
</feature>
<feature type="helix" evidence="17">
    <location>
        <begin position="167"/>
        <end position="176"/>
    </location>
</feature>
<feature type="turn" evidence="17">
    <location>
        <begin position="184"/>
        <end position="187"/>
    </location>
</feature>
<feature type="strand" evidence="17">
    <location>
        <begin position="193"/>
        <end position="196"/>
    </location>
</feature>
<feature type="helix" evidence="17">
    <location>
        <begin position="199"/>
        <end position="201"/>
    </location>
</feature>
<feature type="helix" evidence="17">
    <location>
        <begin position="207"/>
        <end position="209"/>
    </location>
</feature>
<feature type="strand" evidence="17">
    <location>
        <begin position="214"/>
        <end position="221"/>
    </location>
</feature>
<feature type="turn" evidence="17">
    <location>
        <begin position="223"/>
        <end position="225"/>
    </location>
</feature>
<feature type="helix" evidence="17">
    <location>
        <begin position="231"/>
        <end position="244"/>
    </location>
</feature>
<feature type="strand" evidence="17">
    <location>
        <begin position="247"/>
        <end position="251"/>
    </location>
</feature>
<feature type="helix" evidence="17">
    <location>
        <begin position="255"/>
        <end position="257"/>
    </location>
</feature>
<feature type="helix" evidence="17">
    <location>
        <begin position="266"/>
        <end position="268"/>
    </location>
</feature>
<feature type="helix" evidence="17">
    <location>
        <begin position="272"/>
        <end position="274"/>
    </location>
</feature>
<feature type="strand" evidence="17">
    <location>
        <begin position="276"/>
        <end position="282"/>
    </location>
</feature>
<feature type="helix" evidence="17">
    <location>
        <begin position="283"/>
        <end position="286"/>
    </location>
</feature>
<feature type="turn" evidence="17">
    <location>
        <begin position="288"/>
        <end position="291"/>
    </location>
</feature>
<feature type="strand" evidence="17">
    <location>
        <begin position="294"/>
        <end position="297"/>
    </location>
</feature>
<feature type="helix" evidence="17">
    <location>
        <begin position="310"/>
        <end position="321"/>
    </location>
</feature>
<feature type="helix" evidence="17">
    <location>
        <begin position="327"/>
        <end position="336"/>
    </location>
</feature>
<feature type="helix" evidence="17">
    <location>
        <begin position="339"/>
        <end position="365"/>
    </location>
</feature>
<feature type="strand" evidence="17">
    <location>
        <begin position="369"/>
        <end position="372"/>
    </location>
</feature>
<feature type="strand" evidence="17">
    <location>
        <begin position="374"/>
        <end position="382"/>
    </location>
</feature>
<feature type="helix" evidence="17">
    <location>
        <begin position="388"/>
        <end position="399"/>
    </location>
</feature>
<feature type="helix" evidence="17">
    <location>
        <begin position="406"/>
        <end position="409"/>
    </location>
</feature>
<feature type="helix" evidence="17">
    <location>
        <begin position="411"/>
        <end position="413"/>
    </location>
</feature>
<feature type="strand" evidence="17">
    <location>
        <begin position="416"/>
        <end position="420"/>
    </location>
</feature>
<feature type="helix" evidence="17">
    <location>
        <begin position="425"/>
        <end position="439"/>
    </location>
</feature>
<evidence type="ECO:0000255" key="1"/>
<evidence type="ECO:0000269" key="2">
    <source>
    </source>
</evidence>
<evidence type="ECO:0000269" key="3">
    <source>
    </source>
</evidence>
<evidence type="ECO:0000269" key="4">
    <source>
    </source>
</evidence>
<evidence type="ECO:0000269" key="5">
    <source>
    </source>
</evidence>
<evidence type="ECO:0000269" key="6">
    <source>
    </source>
</evidence>
<evidence type="ECO:0000269" key="7">
    <source>
    </source>
</evidence>
<evidence type="ECO:0000269" key="8">
    <source>
    </source>
</evidence>
<evidence type="ECO:0000269" key="9">
    <source>
    </source>
</evidence>
<evidence type="ECO:0000269" key="10">
    <source>
    </source>
</evidence>
<evidence type="ECO:0000269" key="11">
    <source>
    </source>
</evidence>
<evidence type="ECO:0000303" key="12">
    <source>
    </source>
</evidence>
<evidence type="ECO:0000305" key="13"/>
<evidence type="ECO:0000312" key="14">
    <source>
        <dbReference type="Araport" id="AT2G13810"/>
    </source>
</evidence>
<evidence type="ECO:0000312" key="15">
    <source>
        <dbReference type="EMBL" id="AAM15253.1"/>
    </source>
</evidence>
<evidence type="ECO:0007744" key="16">
    <source>
        <dbReference type="PDB" id="4FL0"/>
    </source>
</evidence>
<evidence type="ECO:0007829" key="17">
    <source>
        <dbReference type="PDB" id="4FL0"/>
    </source>
</evidence>